<organism>
    <name type="scientific">Streptococcus pyogenes serotype M5 (strain Manfredo)</name>
    <dbReference type="NCBI Taxonomy" id="160491"/>
    <lineage>
        <taxon>Bacteria</taxon>
        <taxon>Bacillati</taxon>
        <taxon>Bacillota</taxon>
        <taxon>Bacilli</taxon>
        <taxon>Lactobacillales</taxon>
        <taxon>Streptococcaceae</taxon>
        <taxon>Streptococcus</taxon>
    </lineage>
</organism>
<keyword id="KW-0963">Cytoplasm</keyword>
<keyword id="KW-0227">DNA damage</keyword>
<keyword id="KW-0233">DNA recombination</keyword>
<keyword id="KW-0234">DNA repair</keyword>
<keyword id="KW-0255">Endonuclease</keyword>
<keyword id="KW-0378">Hydrolase</keyword>
<keyword id="KW-0460">Magnesium</keyword>
<keyword id="KW-0479">Metal-binding</keyword>
<keyword id="KW-0540">Nuclease</keyword>
<sequence length="202" mass="23387">MVNYPHNLIRQKVSSVQKQTKQNKVDFANRGMSFEAAINATNDYYLSRQIAVIHKKPTPVQIVKVDYPKRSRAKIVEAYFRQASTTDYCGVYKGHYVDFEAKETRQKTAMPMKNFHLHQIEHMTCVLHQKGICFVLLHFSTLKETYYLPAQALISFYQIDNGSKSMPIDYIRKNGFKVAFGAFPQVPYLNIIEQNFLGGDYN</sequence>
<evidence type="ECO:0000255" key="1">
    <source>
        <dbReference type="HAMAP-Rule" id="MF_00130"/>
    </source>
</evidence>
<protein>
    <recommendedName>
        <fullName evidence="1">Holliday junction resolvase RecU</fullName>
        <ecNumber evidence="1">3.1.21.10</ecNumber>
    </recommendedName>
    <alternativeName>
        <fullName evidence="1">Recombination protein U homolog</fullName>
    </alternativeName>
</protein>
<reference key="1">
    <citation type="journal article" date="2007" name="J. Bacteriol.">
        <title>Complete genome of acute rheumatic fever-associated serotype M5 Streptococcus pyogenes strain Manfredo.</title>
        <authorList>
            <person name="Holden M.T.G."/>
            <person name="Scott A."/>
            <person name="Cherevach I."/>
            <person name="Chillingworth T."/>
            <person name="Churcher C."/>
            <person name="Cronin A."/>
            <person name="Dowd L."/>
            <person name="Feltwell T."/>
            <person name="Hamlin N."/>
            <person name="Holroyd S."/>
            <person name="Jagels K."/>
            <person name="Moule S."/>
            <person name="Mungall K."/>
            <person name="Quail M.A."/>
            <person name="Price C."/>
            <person name="Rabbinowitsch E."/>
            <person name="Sharp S."/>
            <person name="Skelton J."/>
            <person name="Whitehead S."/>
            <person name="Barrell B.G."/>
            <person name="Kehoe M."/>
            <person name="Parkhill J."/>
        </authorList>
    </citation>
    <scope>NUCLEOTIDE SEQUENCE [LARGE SCALE GENOMIC DNA]</scope>
    <source>
        <strain>Manfredo</strain>
    </source>
</reference>
<feature type="chain" id="PRO_1000016752" description="Holliday junction resolvase RecU">
    <location>
        <begin position="1"/>
        <end position="202"/>
    </location>
</feature>
<feature type="binding site" evidence="1">
    <location>
        <position position="85"/>
    </location>
    <ligand>
        <name>Mg(2+)</name>
        <dbReference type="ChEBI" id="CHEBI:18420"/>
    </ligand>
</feature>
<feature type="binding site" evidence="1">
    <location>
        <position position="87"/>
    </location>
    <ligand>
        <name>Mg(2+)</name>
        <dbReference type="ChEBI" id="CHEBI:18420"/>
    </ligand>
</feature>
<feature type="binding site" evidence="1">
    <location>
        <position position="100"/>
    </location>
    <ligand>
        <name>Mg(2+)</name>
        <dbReference type="ChEBI" id="CHEBI:18420"/>
    </ligand>
</feature>
<feature type="binding site" evidence="1">
    <location>
        <position position="119"/>
    </location>
    <ligand>
        <name>Mg(2+)</name>
        <dbReference type="ChEBI" id="CHEBI:18420"/>
    </ligand>
</feature>
<feature type="site" description="Transition state stabilizer" evidence="1">
    <location>
        <position position="102"/>
    </location>
</feature>
<gene>
    <name evidence="1" type="primary">recU</name>
    <name type="ordered locus">SpyM50437</name>
</gene>
<dbReference type="EC" id="3.1.21.10" evidence="1"/>
<dbReference type="EMBL" id="AM295007">
    <property type="protein sequence ID" value="CAM29779.1"/>
    <property type="molecule type" value="Genomic_DNA"/>
</dbReference>
<dbReference type="RefSeq" id="WP_011888663.1">
    <property type="nucleotide sequence ID" value="NC_009332.1"/>
</dbReference>
<dbReference type="SMR" id="A2RD54"/>
<dbReference type="KEGG" id="spf:SpyM50437"/>
<dbReference type="HOGENOM" id="CLU_096340_0_0_9"/>
<dbReference type="GO" id="GO:0005737">
    <property type="term" value="C:cytoplasm"/>
    <property type="evidence" value="ECO:0007669"/>
    <property type="project" value="UniProtKB-SubCell"/>
</dbReference>
<dbReference type="GO" id="GO:0004519">
    <property type="term" value="F:endonuclease activity"/>
    <property type="evidence" value="ECO:0007669"/>
    <property type="project" value="UniProtKB-UniRule"/>
</dbReference>
<dbReference type="GO" id="GO:0000287">
    <property type="term" value="F:magnesium ion binding"/>
    <property type="evidence" value="ECO:0007669"/>
    <property type="project" value="UniProtKB-UniRule"/>
</dbReference>
<dbReference type="GO" id="GO:0003676">
    <property type="term" value="F:nucleic acid binding"/>
    <property type="evidence" value="ECO:0007669"/>
    <property type="project" value="InterPro"/>
</dbReference>
<dbReference type="GO" id="GO:0007059">
    <property type="term" value="P:chromosome segregation"/>
    <property type="evidence" value="ECO:0007669"/>
    <property type="project" value="UniProtKB-UniRule"/>
</dbReference>
<dbReference type="GO" id="GO:0006310">
    <property type="term" value="P:DNA recombination"/>
    <property type="evidence" value="ECO:0007669"/>
    <property type="project" value="UniProtKB-UniRule"/>
</dbReference>
<dbReference type="GO" id="GO:0006281">
    <property type="term" value="P:DNA repair"/>
    <property type="evidence" value="ECO:0007669"/>
    <property type="project" value="UniProtKB-UniRule"/>
</dbReference>
<dbReference type="CDD" id="cd22354">
    <property type="entry name" value="RecU-like"/>
    <property type="match status" value="1"/>
</dbReference>
<dbReference type="Gene3D" id="3.40.1350.10">
    <property type="match status" value="1"/>
</dbReference>
<dbReference type="HAMAP" id="MF_00130">
    <property type="entry name" value="RecU"/>
    <property type="match status" value="1"/>
</dbReference>
<dbReference type="InterPro" id="IPR004612">
    <property type="entry name" value="Resolv_RecU"/>
</dbReference>
<dbReference type="InterPro" id="IPR011335">
    <property type="entry name" value="Restrct_endonuc-II-like"/>
</dbReference>
<dbReference type="InterPro" id="IPR011856">
    <property type="entry name" value="tRNA_endonuc-like_dom_sf"/>
</dbReference>
<dbReference type="NCBIfam" id="NF002580">
    <property type="entry name" value="PRK02234.1-1"/>
    <property type="match status" value="1"/>
</dbReference>
<dbReference type="NCBIfam" id="NF002584">
    <property type="entry name" value="PRK02234.1-5"/>
    <property type="match status" value="1"/>
</dbReference>
<dbReference type="NCBIfam" id="TIGR00648">
    <property type="entry name" value="recU"/>
    <property type="match status" value="1"/>
</dbReference>
<dbReference type="Pfam" id="PF03838">
    <property type="entry name" value="RecU"/>
    <property type="match status" value="1"/>
</dbReference>
<dbReference type="PIRSF" id="PIRSF037785">
    <property type="entry name" value="RecU"/>
    <property type="match status" value="1"/>
</dbReference>
<dbReference type="SUPFAM" id="SSF52980">
    <property type="entry name" value="Restriction endonuclease-like"/>
    <property type="match status" value="1"/>
</dbReference>
<comment type="function">
    <text evidence="1">Endonuclease that resolves Holliday junction intermediates in genetic recombination. Cleaves mobile four-strand junctions by introducing symmetrical nicks in paired strands. Promotes annealing of linear ssDNA with homologous dsDNA. Required for DNA repair, homologous recombination and chromosome segregation.</text>
</comment>
<comment type="catalytic activity">
    <reaction evidence="1">
        <text>Endonucleolytic cleavage at a junction such as a reciprocal single-stranded crossover between two homologous DNA duplexes (Holliday junction).</text>
        <dbReference type="EC" id="3.1.21.10"/>
    </reaction>
</comment>
<comment type="cofactor">
    <cofactor evidence="1">
        <name>Mg(2+)</name>
        <dbReference type="ChEBI" id="CHEBI:18420"/>
    </cofactor>
    <text evidence="1">Binds 1 Mg(2+) ion per subunit.</text>
</comment>
<comment type="subcellular location">
    <subcellularLocation>
        <location evidence="1">Cytoplasm</location>
    </subcellularLocation>
</comment>
<comment type="similarity">
    <text evidence="1">Belongs to the RecU family.</text>
</comment>
<name>RECU_STRPG</name>
<proteinExistence type="inferred from homology"/>
<accession>A2RD54</accession>